<gene>
    <name evidence="1" type="primary">rpmH</name>
    <name type="ordered locus">CLI_3893</name>
</gene>
<protein>
    <recommendedName>
        <fullName evidence="1">Large ribosomal subunit protein bL34</fullName>
    </recommendedName>
    <alternativeName>
        <fullName evidence="3">50S ribosomal protein L34</fullName>
    </alternativeName>
</protein>
<proteinExistence type="inferred from homology"/>
<reference key="1">
    <citation type="submission" date="2007-06" db="EMBL/GenBank/DDBJ databases">
        <authorList>
            <person name="Brinkac L.M."/>
            <person name="Daugherty S."/>
            <person name="Dodson R.J."/>
            <person name="Madupu R."/>
            <person name="Brown J.L."/>
            <person name="Bruce D."/>
            <person name="Detter C."/>
            <person name="Munk C."/>
            <person name="Smith L.A."/>
            <person name="Smith T.J."/>
            <person name="White O."/>
            <person name="Brettin T.S."/>
        </authorList>
    </citation>
    <scope>NUCLEOTIDE SEQUENCE [LARGE SCALE GENOMIC DNA]</scope>
    <source>
        <strain>Langeland / NCTC 10281 / Type F</strain>
    </source>
</reference>
<name>RL34_CLOBL</name>
<keyword id="KW-0687">Ribonucleoprotein</keyword>
<keyword id="KW-0689">Ribosomal protein</keyword>
<comment type="similarity">
    <text evidence="1">Belongs to the bacterial ribosomal protein bL34 family.</text>
</comment>
<dbReference type="EMBL" id="CP000728">
    <property type="protein sequence ID" value="ABS39841.1"/>
    <property type="molecule type" value="Genomic_DNA"/>
</dbReference>
<dbReference type="RefSeq" id="WP_003359452.1">
    <property type="nucleotide sequence ID" value="NC_009699.1"/>
</dbReference>
<dbReference type="SMR" id="A7GJP4"/>
<dbReference type="GeneID" id="92940449"/>
<dbReference type="KEGG" id="cbf:CLI_3893"/>
<dbReference type="HOGENOM" id="CLU_129938_2_0_9"/>
<dbReference type="Proteomes" id="UP000002410">
    <property type="component" value="Chromosome"/>
</dbReference>
<dbReference type="GO" id="GO:1990904">
    <property type="term" value="C:ribonucleoprotein complex"/>
    <property type="evidence" value="ECO:0007669"/>
    <property type="project" value="UniProtKB-KW"/>
</dbReference>
<dbReference type="GO" id="GO:0005840">
    <property type="term" value="C:ribosome"/>
    <property type="evidence" value="ECO:0007669"/>
    <property type="project" value="UniProtKB-KW"/>
</dbReference>
<dbReference type="GO" id="GO:0003735">
    <property type="term" value="F:structural constituent of ribosome"/>
    <property type="evidence" value="ECO:0007669"/>
    <property type="project" value="InterPro"/>
</dbReference>
<dbReference type="GO" id="GO:0006412">
    <property type="term" value="P:translation"/>
    <property type="evidence" value="ECO:0007669"/>
    <property type="project" value="UniProtKB-UniRule"/>
</dbReference>
<dbReference type="FunFam" id="1.10.287.3980:FF:000001">
    <property type="entry name" value="Mitochondrial ribosomal protein L34"/>
    <property type="match status" value="1"/>
</dbReference>
<dbReference type="Gene3D" id="1.10.287.3980">
    <property type="match status" value="1"/>
</dbReference>
<dbReference type="HAMAP" id="MF_00391">
    <property type="entry name" value="Ribosomal_bL34"/>
    <property type="match status" value="1"/>
</dbReference>
<dbReference type="InterPro" id="IPR000271">
    <property type="entry name" value="Ribosomal_bL34"/>
</dbReference>
<dbReference type="InterPro" id="IPR020939">
    <property type="entry name" value="Ribosomal_bL34_CS"/>
</dbReference>
<dbReference type="NCBIfam" id="TIGR01030">
    <property type="entry name" value="rpmH_bact"/>
    <property type="match status" value="1"/>
</dbReference>
<dbReference type="PANTHER" id="PTHR14503:SF4">
    <property type="entry name" value="LARGE RIBOSOMAL SUBUNIT PROTEIN BL34M"/>
    <property type="match status" value="1"/>
</dbReference>
<dbReference type="PANTHER" id="PTHR14503">
    <property type="entry name" value="MITOCHONDRIAL RIBOSOMAL PROTEIN 34 FAMILY MEMBER"/>
    <property type="match status" value="1"/>
</dbReference>
<dbReference type="Pfam" id="PF00468">
    <property type="entry name" value="Ribosomal_L34"/>
    <property type="match status" value="1"/>
</dbReference>
<dbReference type="PROSITE" id="PS00784">
    <property type="entry name" value="RIBOSOMAL_L34"/>
    <property type="match status" value="1"/>
</dbReference>
<sequence length="44" mass="5506">MFMTYQPKKRQRKKEHGFRKRMKTSSGRNILRKRRQKGRKRLTA</sequence>
<evidence type="ECO:0000255" key="1">
    <source>
        <dbReference type="HAMAP-Rule" id="MF_00391"/>
    </source>
</evidence>
<evidence type="ECO:0000256" key="2">
    <source>
        <dbReference type="SAM" id="MobiDB-lite"/>
    </source>
</evidence>
<evidence type="ECO:0000305" key="3"/>
<organism>
    <name type="scientific">Clostridium botulinum (strain Langeland / NCTC 10281 / Type F)</name>
    <dbReference type="NCBI Taxonomy" id="441772"/>
    <lineage>
        <taxon>Bacteria</taxon>
        <taxon>Bacillati</taxon>
        <taxon>Bacillota</taxon>
        <taxon>Clostridia</taxon>
        <taxon>Eubacteriales</taxon>
        <taxon>Clostridiaceae</taxon>
        <taxon>Clostridium</taxon>
    </lineage>
</organism>
<feature type="chain" id="PRO_1000013320" description="Large ribosomal subunit protein bL34">
    <location>
        <begin position="1"/>
        <end position="44"/>
    </location>
</feature>
<feature type="region of interest" description="Disordered" evidence="2">
    <location>
        <begin position="1"/>
        <end position="44"/>
    </location>
</feature>
<feature type="compositionally biased region" description="Basic residues" evidence="2">
    <location>
        <begin position="7"/>
        <end position="23"/>
    </location>
</feature>
<feature type="compositionally biased region" description="Basic residues" evidence="2">
    <location>
        <begin position="30"/>
        <end position="44"/>
    </location>
</feature>
<accession>A7GJP4</accession>